<evidence type="ECO:0000255" key="1">
    <source>
        <dbReference type="HAMAP-Rule" id="MF_01891"/>
    </source>
</evidence>
<evidence type="ECO:0000269" key="2">
    <source>
    </source>
</evidence>
<dbReference type="EMBL" id="U96964">
    <property type="protein sequence ID" value="AAB69768.1"/>
    <property type="molecule type" value="Genomic_DNA"/>
</dbReference>
<dbReference type="SMR" id="O34202"/>
<dbReference type="STRING" id="584.AOUC001_07215"/>
<dbReference type="GO" id="GO:0005737">
    <property type="term" value="C:cytoplasm"/>
    <property type="evidence" value="ECO:0007669"/>
    <property type="project" value="UniProtKB-SubCell"/>
</dbReference>
<dbReference type="GO" id="GO:0003677">
    <property type="term" value="F:DNA binding"/>
    <property type="evidence" value="ECO:0007669"/>
    <property type="project" value="UniProtKB-UniRule"/>
</dbReference>
<dbReference type="GO" id="GO:0008270">
    <property type="term" value="F:zinc ion binding"/>
    <property type="evidence" value="ECO:0007669"/>
    <property type="project" value="UniProtKB-UniRule"/>
</dbReference>
<dbReference type="GO" id="GO:0044781">
    <property type="term" value="P:bacterial-type flagellum organization"/>
    <property type="evidence" value="ECO:0007669"/>
    <property type="project" value="UniProtKB-KW"/>
</dbReference>
<dbReference type="GO" id="GO:0045893">
    <property type="term" value="P:positive regulation of DNA-templated transcription"/>
    <property type="evidence" value="ECO:0007669"/>
    <property type="project" value="InterPro"/>
</dbReference>
<dbReference type="GO" id="GO:1902208">
    <property type="term" value="P:regulation of bacterial-type flagellum assembly"/>
    <property type="evidence" value="ECO:0007669"/>
    <property type="project" value="UniProtKB-UniRule"/>
</dbReference>
<dbReference type="HAMAP" id="MF_01891">
    <property type="entry name" value="FhlC"/>
    <property type="match status" value="1"/>
</dbReference>
<dbReference type="InterPro" id="IPR007944">
    <property type="entry name" value="FlhC"/>
</dbReference>
<dbReference type="NCBIfam" id="NF009365">
    <property type="entry name" value="PRK12722.1"/>
    <property type="match status" value="1"/>
</dbReference>
<dbReference type="Pfam" id="PF05280">
    <property type="entry name" value="FlhC"/>
    <property type="match status" value="1"/>
</dbReference>
<dbReference type="PIRSF" id="PIRSF003159">
    <property type="entry name" value="FlhC"/>
    <property type="match status" value="1"/>
</dbReference>
<dbReference type="SUPFAM" id="SSF160930">
    <property type="entry name" value="FlhC-like"/>
    <property type="match status" value="1"/>
</dbReference>
<reference key="1">
    <citation type="journal article" date="1997" name="J. Bacteriol.">
        <title>Negative feedback from a Proteus class II flagellum export defect to the flhDC master operon controlling cell division and flagellum assembly.</title>
        <authorList>
            <person name="Furness R.B."/>
            <person name="Fraser G.M."/>
            <person name="Hay N.A."/>
            <person name="Hughes C."/>
        </authorList>
    </citation>
    <scope>NUCLEOTIDE SEQUENCE [GENOMIC DNA]</scope>
    <source>
        <strain>U6450</strain>
    </source>
</reference>
<reference key="2">
    <citation type="journal article" date="2002" name="J. Mol. Biol.">
        <title>Interaction of the atypical prokaryotic transcription activator FlhD2C2 with early promoters of the flagellar gene hierarchy.</title>
        <authorList>
            <person name="Claret L."/>
            <person name="Hughes C."/>
        </authorList>
    </citation>
    <scope>FUNCTION</scope>
    <scope>INTERACTION WITH FLHD</scope>
    <scope>DNA-BINDING</scope>
    <source>
        <strain>U6450</strain>
    </source>
</reference>
<accession>O34202</accession>
<feature type="chain" id="PRO_0000064341" description="Flagellar transcriptional regulator FlhC">
    <location>
        <begin position="1"/>
        <end position="193"/>
    </location>
</feature>
<feature type="binding site" evidence="1">
    <location>
        <position position="138"/>
    </location>
    <ligand>
        <name>Zn(2+)</name>
        <dbReference type="ChEBI" id="CHEBI:29105"/>
    </ligand>
</feature>
<feature type="binding site" evidence="1">
    <location>
        <position position="141"/>
    </location>
    <ligand>
        <name>Zn(2+)</name>
        <dbReference type="ChEBI" id="CHEBI:29105"/>
    </ligand>
</feature>
<feature type="binding site" evidence="1">
    <location>
        <position position="158"/>
    </location>
    <ligand>
        <name>Zn(2+)</name>
        <dbReference type="ChEBI" id="CHEBI:29105"/>
    </ligand>
</feature>
<feature type="binding site" evidence="1">
    <location>
        <position position="161"/>
    </location>
    <ligand>
        <name>Zn(2+)</name>
        <dbReference type="ChEBI" id="CHEBI:29105"/>
    </ligand>
</feature>
<sequence>MSEKSIVREAKDIRLAMELITLGARLQMLESETQLSRGRLIKLYKELRGSPPPKGMLPFSTDWFMTWEQNIHSSMFYNAYRFLLKSGGSVGIEAVVKAYRLYLEQCPPVKDQEPILALTRAWTLVRFVESGMLQLSVCTKCNGSFITHAHQPASNYVCSLCQPPSRAIKKRKLSANPADINLQLLDGLEQFRM</sequence>
<name>FLHC_PROMI</name>
<gene>
    <name evidence="1" type="primary">flhC</name>
</gene>
<comment type="function">
    <text evidence="1 2">Functions in complex with FlhD as a master transcriptional regulator that regulates transcription of several flagellar and non-flagellar operons by binding to their promoter region. Activates expression of class 2 flagellar genes, including fliA, which is a flagellum-specific sigma factor that turns on the class 3 genes. Also regulates genes whose products function in a variety of physiological pathways.</text>
</comment>
<comment type="cofactor">
    <cofactor evidence="1">
        <name>Zn(2+)</name>
        <dbReference type="ChEBI" id="CHEBI:29105"/>
    </cofactor>
    <text evidence="1">Binds 1 zinc ion per subunit.</text>
</comment>
<comment type="subunit">
    <text evidence="1">Heterohexamer composed of two FlhC and four FlhD subunits. Each FlhC binds a FlhD dimer, forming a heterotrimer, and a hexamer assembles by dimerization of two heterotrimers.</text>
</comment>
<comment type="subcellular location">
    <subcellularLocation>
        <location evidence="1">Cytoplasm</location>
    </subcellularLocation>
</comment>
<comment type="similarity">
    <text evidence="1">Belongs to the FlhC family.</text>
</comment>
<keyword id="KW-0010">Activator</keyword>
<keyword id="KW-1005">Bacterial flagellum biogenesis</keyword>
<keyword id="KW-0963">Cytoplasm</keyword>
<keyword id="KW-0238">DNA-binding</keyword>
<keyword id="KW-0479">Metal-binding</keyword>
<keyword id="KW-0804">Transcription</keyword>
<keyword id="KW-0805">Transcription regulation</keyword>
<keyword id="KW-0862">Zinc</keyword>
<organism>
    <name type="scientific">Proteus mirabilis</name>
    <dbReference type="NCBI Taxonomy" id="584"/>
    <lineage>
        <taxon>Bacteria</taxon>
        <taxon>Pseudomonadati</taxon>
        <taxon>Pseudomonadota</taxon>
        <taxon>Gammaproteobacteria</taxon>
        <taxon>Enterobacterales</taxon>
        <taxon>Morganellaceae</taxon>
        <taxon>Proteus</taxon>
    </lineage>
</organism>
<protein>
    <recommendedName>
        <fullName evidence="1">Flagellar transcriptional regulator FlhC</fullName>
    </recommendedName>
</protein>
<proteinExistence type="evidence at protein level"/>